<name>G6PI_LEGPL</name>
<comment type="function">
    <text evidence="1">Catalyzes the reversible isomerization of glucose-6-phosphate to fructose-6-phosphate.</text>
</comment>
<comment type="catalytic activity">
    <reaction evidence="1">
        <text>alpha-D-glucose 6-phosphate = beta-D-fructose 6-phosphate</text>
        <dbReference type="Rhea" id="RHEA:11816"/>
        <dbReference type="ChEBI" id="CHEBI:57634"/>
        <dbReference type="ChEBI" id="CHEBI:58225"/>
        <dbReference type="EC" id="5.3.1.9"/>
    </reaction>
</comment>
<comment type="pathway">
    <text evidence="1">Carbohydrate biosynthesis; gluconeogenesis.</text>
</comment>
<comment type="pathway">
    <text evidence="1">Carbohydrate degradation; glycolysis; D-glyceraldehyde 3-phosphate and glycerone phosphate from D-glucose: step 2/4.</text>
</comment>
<comment type="subcellular location">
    <subcellularLocation>
        <location evidence="1">Cytoplasm</location>
    </subcellularLocation>
</comment>
<comment type="similarity">
    <text evidence="1">Belongs to the GPI family.</text>
</comment>
<sequence length="499" mass="56426">MIRNSMKSHTELLSWSLLQKEAKRVRLNSDSQPRVVPDSNNYESRKQINCIVYDYSRQRVNRTIIDLLIDLANEVKLPEKIDNLINGKKINISENRPALHTALRDLSNKSILIDGLDIMSEVVSTREKIRMISNRIREKKWLGYSGLPITDVVNIGIGGSDLGPRVCIHALSNYVSKEFNYHFISDVDPASFNDVIVKINPETTLFIVSSKSFTTKETLLNARKAFALYEDRASIDQHFIAVTAHPERAHQIGIKTVLPIWDWVGGRFSFCSAVNLITAIAIGYEQFVELLAGAHDVDTHVQFTDFKNNIPVLMALIGIWNNNFLNIHNLLILTYSKKLEYFVPYVQQLDMESNGKSIDVNGRMVGYATGPIVWGGLGNQAQHSYFQLLCQGTHRCVGDFITLKTNDEHEINSMCHYKMKVLSEGIQTIENPYGYIPGNMPMNHLILSDCSPYTLGALVALYEHKIFVQSVIWNINPFDQPGIESAKSAHREITLSSEL</sequence>
<feature type="chain" id="PRO_0000180662" description="Glucose-6-phosphate isomerase">
    <location>
        <begin position="1"/>
        <end position="499"/>
    </location>
</feature>
<feature type="active site" description="Proton donor" evidence="1">
    <location>
        <position position="352"/>
    </location>
</feature>
<feature type="active site" evidence="1">
    <location>
        <position position="383"/>
    </location>
</feature>
<feature type="active site" evidence="1">
    <location>
        <position position="487"/>
    </location>
</feature>
<dbReference type="EC" id="5.3.1.9" evidence="1"/>
<dbReference type="EMBL" id="CR628337">
    <property type="protein sequence ID" value="CAH15030.1"/>
    <property type="molecule type" value="Genomic_DNA"/>
</dbReference>
<dbReference type="SMR" id="Q5WYE0"/>
<dbReference type="KEGG" id="lpf:lpl0796"/>
<dbReference type="LegioList" id="lpl0796"/>
<dbReference type="HOGENOM" id="CLU_017947_3_1_6"/>
<dbReference type="UniPathway" id="UPA00109">
    <property type="reaction ID" value="UER00181"/>
</dbReference>
<dbReference type="UniPathway" id="UPA00138"/>
<dbReference type="Proteomes" id="UP000002517">
    <property type="component" value="Chromosome"/>
</dbReference>
<dbReference type="GO" id="GO:0005829">
    <property type="term" value="C:cytosol"/>
    <property type="evidence" value="ECO:0007669"/>
    <property type="project" value="TreeGrafter"/>
</dbReference>
<dbReference type="GO" id="GO:0097367">
    <property type="term" value="F:carbohydrate derivative binding"/>
    <property type="evidence" value="ECO:0007669"/>
    <property type="project" value="InterPro"/>
</dbReference>
<dbReference type="GO" id="GO:0004347">
    <property type="term" value="F:glucose-6-phosphate isomerase activity"/>
    <property type="evidence" value="ECO:0007669"/>
    <property type="project" value="UniProtKB-UniRule"/>
</dbReference>
<dbReference type="GO" id="GO:0048029">
    <property type="term" value="F:monosaccharide binding"/>
    <property type="evidence" value="ECO:0007669"/>
    <property type="project" value="TreeGrafter"/>
</dbReference>
<dbReference type="GO" id="GO:0006094">
    <property type="term" value="P:gluconeogenesis"/>
    <property type="evidence" value="ECO:0007669"/>
    <property type="project" value="UniProtKB-UniRule"/>
</dbReference>
<dbReference type="GO" id="GO:0051156">
    <property type="term" value="P:glucose 6-phosphate metabolic process"/>
    <property type="evidence" value="ECO:0007669"/>
    <property type="project" value="TreeGrafter"/>
</dbReference>
<dbReference type="GO" id="GO:0006096">
    <property type="term" value="P:glycolytic process"/>
    <property type="evidence" value="ECO:0007669"/>
    <property type="project" value="UniProtKB-UniRule"/>
</dbReference>
<dbReference type="CDD" id="cd05015">
    <property type="entry name" value="SIS_PGI_1"/>
    <property type="match status" value="1"/>
</dbReference>
<dbReference type="CDD" id="cd05016">
    <property type="entry name" value="SIS_PGI_2"/>
    <property type="match status" value="1"/>
</dbReference>
<dbReference type="Gene3D" id="3.40.50.10490">
    <property type="entry name" value="Glucose-6-phosphate isomerase like protein, domain 1"/>
    <property type="match status" value="3"/>
</dbReference>
<dbReference type="HAMAP" id="MF_00473">
    <property type="entry name" value="G6P_isomerase"/>
    <property type="match status" value="1"/>
</dbReference>
<dbReference type="InterPro" id="IPR001672">
    <property type="entry name" value="G6P_Isomerase"/>
</dbReference>
<dbReference type="InterPro" id="IPR018189">
    <property type="entry name" value="Phosphoglucose_isomerase_CS"/>
</dbReference>
<dbReference type="InterPro" id="IPR046348">
    <property type="entry name" value="SIS_dom_sf"/>
</dbReference>
<dbReference type="InterPro" id="IPR035476">
    <property type="entry name" value="SIS_PGI_1"/>
</dbReference>
<dbReference type="InterPro" id="IPR035482">
    <property type="entry name" value="SIS_PGI_2"/>
</dbReference>
<dbReference type="NCBIfam" id="NF001211">
    <property type="entry name" value="PRK00179.1"/>
    <property type="match status" value="1"/>
</dbReference>
<dbReference type="PANTHER" id="PTHR11469">
    <property type="entry name" value="GLUCOSE-6-PHOSPHATE ISOMERASE"/>
    <property type="match status" value="1"/>
</dbReference>
<dbReference type="PANTHER" id="PTHR11469:SF1">
    <property type="entry name" value="GLUCOSE-6-PHOSPHATE ISOMERASE"/>
    <property type="match status" value="1"/>
</dbReference>
<dbReference type="Pfam" id="PF00342">
    <property type="entry name" value="PGI"/>
    <property type="match status" value="1"/>
</dbReference>
<dbReference type="PRINTS" id="PR00662">
    <property type="entry name" value="G6PISOMERASE"/>
</dbReference>
<dbReference type="SUPFAM" id="SSF53697">
    <property type="entry name" value="SIS domain"/>
    <property type="match status" value="1"/>
</dbReference>
<dbReference type="PROSITE" id="PS00765">
    <property type="entry name" value="P_GLUCOSE_ISOMERASE_1"/>
    <property type="match status" value="1"/>
</dbReference>
<dbReference type="PROSITE" id="PS00174">
    <property type="entry name" value="P_GLUCOSE_ISOMERASE_2"/>
    <property type="match status" value="1"/>
</dbReference>
<dbReference type="PROSITE" id="PS51463">
    <property type="entry name" value="P_GLUCOSE_ISOMERASE_3"/>
    <property type="match status" value="1"/>
</dbReference>
<organism>
    <name type="scientific">Legionella pneumophila (strain Lens)</name>
    <dbReference type="NCBI Taxonomy" id="297245"/>
    <lineage>
        <taxon>Bacteria</taxon>
        <taxon>Pseudomonadati</taxon>
        <taxon>Pseudomonadota</taxon>
        <taxon>Gammaproteobacteria</taxon>
        <taxon>Legionellales</taxon>
        <taxon>Legionellaceae</taxon>
        <taxon>Legionella</taxon>
    </lineage>
</organism>
<proteinExistence type="inferred from homology"/>
<accession>Q5WYE0</accession>
<evidence type="ECO:0000255" key="1">
    <source>
        <dbReference type="HAMAP-Rule" id="MF_00473"/>
    </source>
</evidence>
<gene>
    <name evidence="1" type="primary">pgi</name>
    <name type="ordered locus">lpl0796</name>
</gene>
<protein>
    <recommendedName>
        <fullName evidence="1">Glucose-6-phosphate isomerase</fullName>
        <shortName evidence="1">GPI</shortName>
        <ecNumber evidence="1">5.3.1.9</ecNumber>
    </recommendedName>
    <alternativeName>
        <fullName evidence="1">Phosphoglucose isomerase</fullName>
        <shortName evidence="1">PGI</shortName>
    </alternativeName>
    <alternativeName>
        <fullName evidence="1">Phosphohexose isomerase</fullName>
        <shortName evidence="1">PHI</shortName>
    </alternativeName>
</protein>
<keyword id="KW-0963">Cytoplasm</keyword>
<keyword id="KW-0312">Gluconeogenesis</keyword>
<keyword id="KW-0324">Glycolysis</keyword>
<keyword id="KW-0413">Isomerase</keyword>
<reference key="1">
    <citation type="journal article" date="2004" name="Nat. Genet.">
        <title>Evidence in the Legionella pneumophila genome for exploitation of host cell functions and high genome plasticity.</title>
        <authorList>
            <person name="Cazalet C."/>
            <person name="Rusniok C."/>
            <person name="Brueggemann H."/>
            <person name="Zidane N."/>
            <person name="Magnier A."/>
            <person name="Ma L."/>
            <person name="Tichit M."/>
            <person name="Jarraud S."/>
            <person name="Bouchier C."/>
            <person name="Vandenesch F."/>
            <person name="Kunst F."/>
            <person name="Etienne J."/>
            <person name="Glaser P."/>
            <person name="Buchrieser C."/>
        </authorList>
    </citation>
    <scope>NUCLEOTIDE SEQUENCE [LARGE SCALE GENOMIC DNA]</scope>
    <source>
        <strain>Lens</strain>
    </source>
</reference>